<name>EX7S_LACJO</name>
<dbReference type="EC" id="3.1.11.6" evidence="1"/>
<dbReference type="EMBL" id="AE017198">
    <property type="protein sequence ID" value="AAS09316.1"/>
    <property type="molecule type" value="Genomic_DNA"/>
</dbReference>
<dbReference type="RefSeq" id="WP_004897067.1">
    <property type="nucleotide sequence ID" value="NC_005362.1"/>
</dbReference>
<dbReference type="SMR" id="Q74IM2"/>
<dbReference type="KEGG" id="ljo:LJ_1548"/>
<dbReference type="eggNOG" id="COG1722">
    <property type="taxonomic scope" value="Bacteria"/>
</dbReference>
<dbReference type="HOGENOM" id="CLU_145918_3_2_9"/>
<dbReference type="Proteomes" id="UP000000581">
    <property type="component" value="Chromosome"/>
</dbReference>
<dbReference type="GO" id="GO:0005829">
    <property type="term" value="C:cytosol"/>
    <property type="evidence" value="ECO:0007669"/>
    <property type="project" value="TreeGrafter"/>
</dbReference>
<dbReference type="GO" id="GO:0009318">
    <property type="term" value="C:exodeoxyribonuclease VII complex"/>
    <property type="evidence" value="ECO:0007669"/>
    <property type="project" value="InterPro"/>
</dbReference>
<dbReference type="GO" id="GO:0008855">
    <property type="term" value="F:exodeoxyribonuclease VII activity"/>
    <property type="evidence" value="ECO:0007669"/>
    <property type="project" value="UniProtKB-UniRule"/>
</dbReference>
<dbReference type="GO" id="GO:0006308">
    <property type="term" value="P:DNA catabolic process"/>
    <property type="evidence" value="ECO:0007669"/>
    <property type="project" value="UniProtKB-UniRule"/>
</dbReference>
<dbReference type="Gene3D" id="1.10.287.1040">
    <property type="entry name" value="Exonuclease VII, small subunit"/>
    <property type="match status" value="1"/>
</dbReference>
<dbReference type="HAMAP" id="MF_00337">
    <property type="entry name" value="Exonuc_7_S"/>
    <property type="match status" value="1"/>
</dbReference>
<dbReference type="InterPro" id="IPR003761">
    <property type="entry name" value="Exonuc_VII_S"/>
</dbReference>
<dbReference type="InterPro" id="IPR037004">
    <property type="entry name" value="Exonuc_VII_ssu_sf"/>
</dbReference>
<dbReference type="NCBIfam" id="NF002138">
    <property type="entry name" value="PRK00977.1-2"/>
    <property type="match status" value="1"/>
</dbReference>
<dbReference type="NCBIfam" id="NF002140">
    <property type="entry name" value="PRK00977.1-4"/>
    <property type="match status" value="1"/>
</dbReference>
<dbReference type="NCBIfam" id="TIGR01280">
    <property type="entry name" value="xseB"/>
    <property type="match status" value="1"/>
</dbReference>
<dbReference type="PANTHER" id="PTHR34137">
    <property type="entry name" value="EXODEOXYRIBONUCLEASE 7 SMALL SUBUNIT"/>
    <property type="match status" value="1"/>
</dbReference>
<dbReference type="PANTHER" id="PTHR34137:SF1">
    <property type="entry name" value="EXODEOXYRIBONUCLEASE 7 SMALL SUBUNIT"/>
    <property type="match status" value="1"/>
</dbReference>
<dbReference type="Pfam" id="PF02609">
    <property type="entry name" value="Exonuc_VII_S"/>
    <property type="match status" value="1"/>
</dbReference>
<dbReference type="SUPFAM" id="SSF116842">
    <property type="entry name" value="XseB-like"/>
    <property type="match status" value="1"/>
</dbReference>
<feature type="chain" id="PRO_0000206958" description="Exodeoxyribonuclease 7 small subunit">
    <location>
        <begin position="1"/>
        <end position="81"/>
    </location>
</feature>
<feature type="region of interest" description="Disordered" evidence="2">
    <location>
        <begin position="60"/>
        <end position="81"/>
    </location>
</feature>
<feature type="compositionally biased region" description="Basic and acidic residues" evidence="2">
    <location>
        <begin position="60"/>
        <end position="70"/>
    </location>
</feature>
<accession>Q74IM2</accession>
<comment type="function">
    <text evidence="1">Bidirectionally degrades single-stranded DNA into large acid-insoluble oligonucleotides, which are then degraded further into small acid-soluble oligonucleotides.</text>
</comment>
<comment type="catalytic activity">
    <reaction evidence="1">
        <text>Exonucleolytic cleavage in either 5'- to 3'- or 3'- to 5'-direction to yield nucleoside 5'-phosphates.</text>
        <dbReference type="EC" id="3.1.11.6"/>
    </reaction>
</comment>
<comment type="subunit">
    <text evidence="1">Heterooligomer composed of large and small subunits.</text>
</comment>
<comment type="subcellular location">
    <subcellularLocation>
        <location evidence="1">Cytoplasm</location>
    </subcellularLocation>
</comment>
<comment type="similarity">
    <text evidence="1">Belongs to the XseB family.</text>
</comment>
<proteinExistence type="inferred from homology"/>
<reference key="1">
    <citation type="journal article" date="2004" name="Proc. Natl. Acad. Sci. U.S.A.">
        <title>The genome sequence of the probiotic intestinal bacterium Lactobacillus johnsonii NCC 533.</title>
        <authorList>
            <person name="Pridmore R.D."/>
            <person name="Berger B."/>
            <person name="Desiere F."/>
            <person name="Vilanova D."/>
            <person name="Barretto C."/>
            <person name="Pittet A.-C."/>
            <person name="Zwahlen M.-C."/>
            <person name="Rouvet M."/>
            <person name="Altermann E."/>
            <person name="Barrangou R."/>
            <person name="Mollet B."/>
            <person name="Mercenier A."/>
            <person name="Klaenhammer T."/>
            <person name="Arigoni F."/>
            <person name="Schell M.A."/>
        </authorList>
    </citation>
    <scope>NUCLEOTIDE SEQUENCE [LARGE SCALE GENOMIC DNA]</scope>
    <source>
        <strain>CNCM I-1225 / La1 / NCC 533</strain>
    </source>
</reference>
<evidence type="ECO:0000255" key="1">
    <source>
        <dbReference type="HAMAP-Rule" id="MF_00337"/>
    </source>
</evidence>
<evidence type="ECO:0000256" key="2">
    <source>
        <dbReference type="SAM" id="MobiDB-lite"/>
    </source>
</evidence>
<protein>
    <recommendedName>
        <fullName evidence="1">Exodeoxyribonuclease 7 small subunit</fullName>
        <ecNumber evidence="1">3.1.11.6</ecNumber>
    </recommendedName>
    <alternativeName>
        <fullName evidence="1">Exodeoxyribonuclease VII small subunit</fullName>
        <shortName evidence="1">Exonuclease VII small subunit</shortName>
    </alternativeName>
</protein>
<organism>
    <name type="scientific">Lactobacillus johnsonii (strain CNCM I-12250 / La1 / NCC 533)</name>
    <dbReference type="NCBI Taxonomy" id="257314"/>
    <lineage>
        <taxon>Bacteria</taxon>
        <taxon>Bacillati</taxon>
        <taxon>Bacillota</taxon>
        <taxon>Bacilli</taxon>
        <taxon>Lactobacillales</taxon>
        <taxon>Lactobacillaceae</taxon>
        <taxon>Lactobacillus</taxon>
    </lineage>
</organism>
<keyword id="KW-0963">Cytoplasm</keyword>
<keyword id="KW-0269">Exonuclease</keyword>
<keyword id="KW-0378">Hydrolase</keyword>
<keyword id="KW-0540">Nuclease</keyword>
<gene>
    <name evidence="1" type="primary">xseB</name>
    <name type="ordered locus">LJ_1548</name>
</gene>
<sequence>MAIKKNNFEEQLNELQEIVNKLESGNVPLEDALSEFQAGVKLSRELEKKLNDAEQTVAKLVDKDGNEKALDPQNASAPEEE</sequence>